<dbReference type="EC" id="3.1.1.31"/>
<dbReference type="EMBL" id="BX284604">
    <property type="protein sequence ID" value="CAB16505.2"/>
    <property type="molecule type" value="Genomic_DNA"/>
</dbReference>
<dbReference type="EMBL" id="BX284604">
    <property type="protein sequence ID" value="CAJ76962.1"/>
    <property type="molecule type" value="Genomic_DNA"/>
</dbReference>
<dbReference type="PIR" id="F88904">
    <property type="entry name" value="F88904"/>
</dbReference>
<dbReference type="PIR" id="T27244">
    <property type="entry name" value="T27244"/>
</dbReference>
<dbReference type="RefSeq" id="NP_001041049.1">
    <property type="nucleotide sequence ID" value="NM_001047584.3"/>
</dbReference>
<dbReference type="RefSeq" id="NP_001041050.1">
    <property type="nucleotide sequence ID" value="NM_001047585.1"/>
</dbReference>
<dbReference type="RefSeq" id="NP_001366933.1">
    <molecule id="O18229-1"/>
    <property type="nucleotide sequence ID" value="NM_001380534.1"/>
</dbReference>
<dbReference type="RefSeq" id="NP_001367136.1">
    <molecule id="O18229-2"/>
    <property type="nucleotide sequence ID" value="NM_001380535.1"/>
</dbReference>
<dbReference type="SMR" id="O18229"/>
<dbReference type="BioGRID" id="43481">
    <property type="interactions" value="10"/>
</dbReference>
<dbReference type="DIP" id="DIP-26505N"/>
<dbReference type="FunCoup" id="O18229">
    <property type="interactions" value="2330"/>
</dbReference>
<dbReference type="STRING" id="6239.Y57G11C.3a.1"/>
<dbReference type="PaxDb" id="6239-Y57G11C.3a"/>
<dbReference type="PeptideAtlas" id="O18229"/>
<dbReference type="EnsemblMetazoa" id="Y57G11C.3a.1">
    <molecule id="O18229-1"/>
    <property type="protein sequence ID" value="Y57G11C.3a.1"/>
    <property type="gene ID" value="WBGene00013301"/>
</dbReference>
<dbReference type="EnsemblMetazoa" id="Y57G11C.3b.1">
    <molecule id="O18229-2"/>
    <property type="protein sequence ID" value="Y57G11C.3b.1"/>
    <property type="gene ID" value="WBGene00013301"/>
</dbReference>
<dbReference type="GeneID" id="178398"/>
<dbReference type="UCSC" id="Y57G11C.3a">
    <molecule id="O18229-1"/>
    <property type="organism name" value="c. elegans"/>
</dbReference>
<dbReference type="AGR" id="WB:WBGene00013301"/>
<dbReference type="WormBase" id="Y57G11C.3a">
    <molecule id="O18229-1"/>
    <property type="protein sequence ID" value="CE24473"/>
    <property type="gene ID" value="WBGene00013301"/>
</dbReference>
<dbReference type="WormBase" id="Y57G11C.3b">
    <molecule id="O18229-2"/>
    <property type="protein sequence ID" value="CE14930"/>
    <property type="gene ID" value="WBGene00013301"/>
</dbReference>
<dbReference type="eggNOG" id="KOG3147">
    <property type="taxonomic scope" value="Eukaryota"/>
</dbReference>
<dbReference type="GeneTree" id="ENSGT00550000075110"/>
<dbReference type="HOGENOM" id="CLU_053947_0_0_1"/>
<dbReference type="InParanoid" id="O18229"/>
<dbReference type="OMA" id="YQLFEFE"/>
<dbReference type="OrthoDB" id="432544at2759"/>
<dbReference type="PhylomeDB" id="O18229"/>
<dbReference type="Reactome" id="R-CEL-71336">
    <property type="pathway name" value="Pentose phosphate pathway"/>
</dbReference>
<dbReference type="UniPathway" id="UPA00115">
    <property type="reaction ID" value="UER00409"/>
</dbReference>
<dbReference type="PRO" id="PR:O18229"/>
<dbReference type="Proteomes" id="UP000001940">
    <property type="component" value="Chromosome IV"/>
</dbReference>
<dbReference type="Bgee" id="WBGene00013301">
    <property type="expression patterns" value="Expressed in embryo and 4 other cell types or tissues"/>
</dbReference>
<dbReference type="GO" id="GO:0005829">
    <property type="term" value="C:cytosol"/>
    <property type="evidence" value="ECO:0000318"/>
    <property type="project" value="GO_Central"/>
</dbReference>
<dbReference type="GO" id="GO:0005783">
    <property type="term" value="C:endoplasmic reticulum"/>
    <property type="evidence" value="ECO:0007005"/>
    <property type="project" value="WormBase"/>
</dbReference>
<dbReference type="GO" id="GO:0005634">
    <property type="term" value="C:nucleus"/>
    <property type="evidence" value="ECO:0000314"/>
    <property type="project" value="UniProtKB"/>
</dbReference>
<dbReference type="GO" id="GO:0030017">
    <property type="term" value="C:sarcomere"/>
    <property type="evidence" value="ECO:0007005"/>
    <property type="project" value="WormBase"/>
</dbReference>
<dbReference type="GO" id="GO:0055120">
    <property type="term" value="C:striated muscle dense body"/>
    <property type="evidence" value="ECO:0007005"/>
    <property type="project" value="WormBase"/>
</dbReference>
<dbReference type="GO" id="GO:0017057">
    <property type="term" value="F:6-phosphogluconolactonase activity"/>
    <property type="evidence" value="ECO:0000318"/>
    <property type="project" value="GO_Central"/>
</dbReference>
<dbReference type="GO" id="GO:0005975">
    <property type="term" value="P:carbohydrate metabolic process"/>
    <property type="evidence" value="ECO:0007669"/>
    <property type="project" value="InterPro"/>
</dbReference>
<dbReference type="GO" id="GO:0009051">
    <property type="term" value="P:pentose-phosphate shunt, oxidative branch"/>
    <property type="evidence" value="ECO:0000318"/>
    <property type="project" value="GO_Central"/>
</dbReference>
<dbReference type="CDD" id="cd01400">
    <property type="entry name" value="6PGL"/>
    <property type="match status" value="1"/>
</dbReference>
<dbReference type="FunFam" id="3.40.50.1360:FF:000040">
    <property type="entry name" value="6-phosphogluconolactonase"/>
    <property type="match status" value="1"/>
</dbReference>
<dbReference type="Gene3D" id="3.40.50.1360">
    <property type="match status" value="1"/>
</dbReference>
<dbReference type="InterPro" id="IPR005900">
    <property type="entry name" value="6-phosphogluconolactonase_DevB"/>
</dbReference>
<dbReference type="InterPro" id="IPR006148">
    <property type="entry name" value="Glc/Gal-6P_isomerase"/>
</dbReference>
<dbReference type="InterPro" id="IPR037171">
    <property type="entry name" value="NagB/RpiA_transferase-like"/>
</dbReference>
<dbReference type="InterPro" id="IPR039104">
    <property type="entry name" value="PGLS"/>
</dbReference>
<dbReference type="NCBIfam" id="TIGR01198">
    <property type="entry name" value="pgl"/>
    <property type="match status" value="1"/>
</dbReference>
<dbReference type="PANTHER" id="PTHR11054">
    <property type="entry name" value="6-PHOSPHOGLUCONOLACTONASE"/>
    <property type="match status" value="1"/>
</dbReference>
<dbReference type="PANTHER" id="PTHR11054:SF0">
    <property type="entry name" value="6-PHOSPHOGLUCONOLACTONASE"/>
    <property type="match status" value="1"/>
</dbReference>
<dbReference type="Pfam" id="PF01182">
    <property type="entry name" value="Glucosamine_iso"/>
    <property type="match status" value="1"/>
</dbReference>
<dbReference type="SUPFAM" id="SSF100950">
    <property type="entry name" value="NagB/RpiA/CoA transferase-like"/>
    <property type="match status" value="1"/>
</dbReference>
<protein>
    <recommendedName>
        <fullName>Putative 6-phosphogluconolactonase</fullName>
        <shortName>6PGL</shortName>
        <ecNumber>3.1.1.31</ecNumber>
    </recommendedName>
</protein>
<reference key="1">
    <citation type="journal article" date="1998" name="Science">
        <title>Genome sequence of the nematode C. elegans: a platform for investigating biology.</title>
        <authorList>
            <consortium name="The C. elegans sequencing consortium"/>
        </authorList>
    </citation>
    <scope>NUCLEOTIDE SEQUENCE [LARGE SCALE GENOMIC DNA]</scope>
    <source>
        <strain>Bristol N2</strain>
    </source>
</reference>
<reference key="2">
    <citation type="journal article" date="2020" name="Elife">
        <title>A Tudor domain protein, SIMR-1, promotes siRNA production at piRNA-targeted mRNAs in C. elegans.</title>
        <authorList>
            <person name="Manage K.I."/>
            <person name="Rogers A.K."/>
            <person name="Wallis D.C."/>
            <person name="Uebel C.J."/>
            <person name="Anderson D.C."/>
            <person name="Nguyen D.A.H."/>
            <person name="Arca K."/>
            <person name="Brown K.C."/>
            <person name="Cordeiro Rodrigues R.J."/>
            <person name="de Albuquerque B.F.M."/>
            <person name="Ketting R.F."/>
            <person name="Montgomery T.A."/>
            <person name="Phillips C.M."/>
        </authorList>
    </citation>
    <scope>SUBCELLULAR LOCATION</scope>
</reference>
<comment type="function">
    <text evidence="1">Hydrolysis of 6-phosphogluconolactone to 6-phosphogluconate.</text>
</comment>
<comment type="catalytic activity">
    <reaction>
        <text>6-phospho-D-glucono-1,5-lactone + H2O = 6-phospho-D-gluconate + H(+)</text>
        <dbReference type="Rhea" id="RHEA:12556"/>
        <dbReference type="ChEBI" id="CHEBI:15377"/>
        <dbReference type="ChEBI" id="CHEBI:15378"/>
        <dbReference type="ChEBI" id="CHEBI:57955"/>
        <dbReference type="ChEBI" id="CHEBI:58759"/>
        <dbReference type="EC" id="3.1.1.31"/>
    </reaction>
</comment>
<comment type="pathway">
    <text>Carbohydrate degradation; pentose phosphate pathway; D-ribulose 5-phosphate from D-glucose 6-phosphate (oxidative stage): step 2/3.</text>
</comment>
<comment type="subcellular location">
    <subcellularLocation>
        <location evidence="3">Nucleus</location>
    </subcellularLocation>
    <text evidence="3">Localizes to the nucleus of germ cells.</text>
</comment>
<comment type="alternative products">
    <event type="alternative splicing"/>
    <isoform>
        <id>O18229-1</id>
        <name evidence="5">a</name>
        <sequence type="displayed"/>
    </isoform>
    <isoform>
        <id>O18229-2</id>
        <name evidence="6">b</name>
        <sequence type="described" ref="VSP_020096"/>
    </isoform>
</comment>
<comment type="similarity">
    <text evidence="4">Belongs to the glucosamine/galactosamine-6-phosphate isomerase family. 6-phosphogluconolactonase subfamily.</text>
</comment>
<name>6PGL_CAEEL</name>
<gene>
    <name evidence="5" type="ORF">Y57G11C.3</name>
</gene>
<accession>O18229</accession>
<accession>Q2EEL9</accession>
<feature type="chain" id="PRO_0000090080" description="Putative 6-phosphogluconolactonase">
    <location>
        <begin position="1"/>
        <end position="269"/>
    </location>
</feature>
<feature type="region of interest" description="Disordered" evidence="2">
    <location>
        <begin position="248"/>
        <end position="269"/>
    </location>
</feature>
<feature type="splice variant" id="VSP_020096" description="In isoform b." evidence="4">
    <location>
        <begin position="1"/>
        <end position="12"/>
    </location>
</feature>
<organism>
    <name type="scientific">Caenorhabditis elegans</name>
    <dbReference type="NCBI Taxonomy" id="6239"/>
    <lineage>
        <taxon>Eukaryota</taxon>
        <taxon>Metazoa</taxon>
        <taxon>Ecdysozoa</taxon>
        <taxon>Nematoda</taxon>
        <taxon>Chromadorea</taxon>
        <taxon>Rhabditida</taxon>
        <taxon>Rhabditina</taxon>
        <taxon>Rhabditomorpha</taxon>
        <taxon>Rhabditoidea</taxon>
        <taxon>Rhabditidae</taxon>
        <taxon>Peloderinae</taxon>
        <taxon>Caenorhabditis</taxon>
    </lineage>
</organism>
<evidence type="ECO:0000250" key="1"/>
<evidence type="ECO:0000256" key="2">
    <source>
        <dbReference type="SAM" id="MobiDB-lite"/>
    </source>
</evidence>
<evidence type="ECO:0000269" key="3">
    <source>
    </source>
</evidence>
<evidence type="ECO:0000305" key="4"/>
<evidence type="ECO:0000312" key="5">
    <source>
        <dbReference type="WormBase" id="Y57G11C.3a"/>
    </source>
</evidence>
<evidence type="ECO:0000312" key="6">
    <source>
        <dbReference type="WormBase" id="Y57G11C.3b"/>
    </source>
</evidence>
<keyword id="KW-0025">Alternative splicing</keyword>
<keyword id="KW-0378">Hydrolase</keyword>
<keyword id="KW-0539">Nucleus</keyword>
<keyword id="KW-1185">Reference proteome</keyword>
<proteinExistence type="inferred from homology"/>
<sequence length="269" mass="30414">MCLVNEFVSNSNMKPALNVSGDEKELILQLRRYLEEKLTYLLDQNGTVSIGVSGGSMPRVFSKAILSLPQEQLNWKRIRIFMVDERNVDLDSEESNQGEYLRLFPNELRDVFVPMQIFKDPCLTAQHYEISLRKYLLPEQLNNTARFDILFLGVGPDGHTASIFPGKERLEKITELNWVSVITDSPKPPPSRITLTLQTLQHAKNVAFIICGKQKAEIVRGICDRDQKYPAAQARPFNDKLTLFLDEDAATGVPDRDSSDSDSPPPFDG</sequence>